<name>RL34B_YEAST</name>
<feature type="chain" id="PRO_0000131846" description="Large ribosomal subunit protein eL34B">
    <location>
        <begin position="1"/>
        <end position="121"/>
    </location>
</feature>
<comment type="function">
    <text evidence="7">Component of the ribosome, a large ribonucleoprotein complex responsible for the synthesis of proteins in the cell. The small ribosomal subunit (SSU) binds messenger RNAs (mRNAs) and translates the encoded message by selecting cognate aminoacyl-transfer RNA (tRNA) molecules. The large subunit (LSU) contains the ribosomal catalytic site termed the peptidyl transferase center (PTC), which catalyzes the formation of peptide bonds, thereby polymerizing the amino acids delivered by tRNAs into a polypeptide chain. The nascent polypeptides leave the ribosome through a tunnel in the LSU and interact with protein factors that function in enzymatic processing, targeting, and the membrane insertion of nascent chains at the exit of the ribosomal tunnel.</text>
</comment>
<comment type="subunit">
    <text evidence="3 8">Component of the large ribosomal subunit (LSU). Mature yeast ribosomes consist of a small (40S) and a large (60S) subunit. The 40S small subunit contains 1 molecule of ribosomal RNA (18S rRNA) and 33 different proteins (encoded by 57 genes). The large 60S subunit contains 3 rRNA molecules (25S, 5.8S and 5S rRNA) and 46 different proteins (encoded by 81 genes) (PubMed:22096102, PubMed:9559554).</text>
</comment>
<comment type="subcellular location">
    <subcellularLocation>
        <location evidence="1 3">Cytoplasm</location>
    </subcellularLocation>
</comment>
<comment type="miscellaneous">
    <text evidence="2">Present with 21000 molecules/cell in log phase SD medium.</text>
</comment>
<comment type="miscellaneous">
    <text evidence="6">There are 2 genes for eL34 in yeast.</text>
</comment>
<comment type="similarity">
    <text evidence="6">Belongs to the eukaryotic ribosomal protein eL34 family.</text>
</comment>
<sequence length="121" mass="13641">MAQRVTFRRRNPYNTRSNKIKVVKTPGGILRAQHVKKLATRPKCGDCGSALQGISTLRPRQYATVSKTHKTVSRAYGGSRCANCVKERIVRAFLIEEQKIVKKVVKEQTEAAKKSEKKSKK</sequence>
<proteinExistence type="evidence at protein level"/>
<dbReference type="EMBL" id="Z38060">
    <property type="protein sequence ID" value="CAA86170.1"/>
    <property type="molecule type" value="Genomic_DNA"/>
</dbReference>
<dbReference type="EMBL" id="BK006942">
    <property type="protein sequence ID" value="DAA08495.1"/>
    <property type="molecule type" value="Genomic_DNA"/>
</dbReference>
<dbReference type="PIR" id="S48427">
    <property type="entry name" value="S48427"/>
</dbReference>
<dbReference type="RefSeq" id="NP_012212.1">
    <property type="nucleotide sequence ID" value="NM_001179402.1"/>
</dbReference>
<dbReference type="SMR" id="P40525"/>
<dbReference type="BioGRID" id="34938">
    <property type="interactions" value="245"/>
</dbReference>
<dbReference type="ComplexPortal" id="CPX-1601">
    <property type="entry name" value="60S cytosolic large ribosomal subunit"/>
</dbReference>
<dbReference type="DIP" id="DIP-5499N"/>
<dbReference type="FunCoup" id="P40525">
    <property type="interactions" value="1009"/>
</dbReference>
<dbReference type="IntAct" id="P40525">
    <property type="interactions" value="118"/>
</dbReference>
<dbReference type="MINT" id="P40525"/>
<dbReference type="STRING" id="4932.YIL052C"/>
<dbReference type="iPTMnet" id="P40525"/>
<dbReference type="PaxDb" id="4932-YIL052C"/>
<dbReference type="PeptideAtlas" id="P40525"/>
<dbReference type="EnsemblFungi" id="YIL052C_mRNA">
    <property type="protein sequence ID" value="YIL052C"/>
    <property type="gene ID" value="YIL052C"/>
</dbReference>
<dbReference type="GeneID" id="854759"/>
<dbReference type="KEGG" id="sce:YIL052C"/>
<dbReference type="AGR" id="SGD:S000001314"/>
<dbReference type="SGD" id="S000001314">
    <property type="gene designation" value="RPL34B"/>
</dbReference>
<dbReference type="VEuPathDB" id="FungiDB:YIL052C"/>
<dbReference type="eggNOG" id="KOG1790">
    <property type="taxonomic scope" value="Eukaryota"/>
</dbReference>
<dbReference type="GeneTree" id="ENSGT00940000168239"/>
<dbReference type="HOGENOM" id="CLU_118652_1_1_1"/>
<dbReference type="InParanoid" id="P40525"/>
<dbReference type="OMA" id="RCHKCVR"/>
<dbReference type="OrthoDB" id="277449at2759"/>
<dbReference type="BioCyc" id="YEAST:G3O-31323-MONOMER"/>
<dbReference type="BioGRID-ORCS" id="854759">
    <property type="hits" value="5 hits in 10 CRISPR screens"/>
</dbReference>
<dbReference type="PRO" id="PR:P40525"/>
<dbReference type="Proteomes" id="UP000002311">
    <property type="component" value="Chromosome IX"/>
</dbReference>
<dbReference type="RNAct" id="P40525">
    <property type="molecule type" value="protein"/>
</dbReference>
<dbReference type="GO" id="GO:0005829">
    <property type="term" value="C:cytosol"/>
    <property type="evidence" value="ECO:0000304"/>
    <property type="project" value="Reactome"/>
</dbReference>
<dbReference type="GO" id="GO:0022625">
    <property type="term" value="C:cytosolic large ribosomal subunit"/>
    <property type="evidence" value="ECO:0000314"/>
    <property type="project" value="SGD"/>
</dbReference>
<dbReference type="GO" id="GO:0003735">
    <property type="term" value="F:structural constituent of ribosome"/>
    <property type="evidence" value="ECO:0000318"/>
    <property type="project" value="GO_Central"/>
</dbReference>
<dbReference type="GO" id="GO:0002181">
    <property type="term" value="P:cytoplasmic translation"/>
    <property type="evidence" value="ECO:0000305"/>
    <property type="project" value="SGD"/>
</dbReference>
<dbReference type="GO" id="GO:0042254">
    <property type="term" value="P:ribosome biogenesis"/>
    <property type="evidence" value="ECO:0000318"/>
    <property type="project" value="GO_Central"/>
</dbReference>
<dbReference type="Gene3D" id="6.20.340.10">
    <property type="match status" value="1"/>
</dbReference>
<dbReference type="Gene3D" id="6.20.370.70">
    <property type="match status" value="1"/>
</dbReference>
<dbReference type="InterPro" id="IPR008195">
    <property type="entry name" value="Ribosomal_eL34"/>
</dbReference>
<dbReference type="InterPro" id="IPR038562">
    <property type="entry name" value="Ribosomal_eL34_C_sf"/>
</dbReference>
<dbReference type="InterPro" id="IPR018065">
    <property type="entry name" value="Ribosomal_eL34_CS"/>
</dbReference>
<dbReference type="PANTHER" id="PTHR10759">
    <property type="entry name" value="60S RIBOSOMAL PROTEIN L34"/>
    <property type="match status" value="1"/>
</dbReference>
<dbReference type="Pfam" id="PF01199">
    <property type="entry name" value="Ribosomal_L34e"/>
    <property type="match status" value="1"/>
</dbReference>
<dbReference type="PRINTS" id="PR01250">
    <property type="entry name" value="RIBOSOMALL34"/>
</dbReference>
<dbReference type="PROSITE" id="PS01145">
    <property type="entry name" value="RIBOSOMAL_L34E"/>
    <property type="match status" value="1"/>
</dbReference>
<keyword id="KW-0963">Cytoplasm</keyword>
<keyword id="KW-1185">Reference proteome</keyword>
<keyword id="KW-0687">Ribonucleoprotein</keyword>
<keyword id="KW-0689">Ribosomal protein</keyword>
<gene>
    <name evidence="5" type="primary">RPL34B</name>
    <name type="ordered locus">YIL052C</name>
</gene>
<accession>P40525</accession>
<accession>D6VVM9</accession>
<organism>
    <name type="scientific">Saccharomyces cerevisiae (strain ATCC 204508 / S288c)</name>
    <name type="common">Baker's yeast</name>
    <dbReference type="NCBI Taxonomy" id="559292"/>
    <lineage>
        <taxon>Eukaryota</taxon>
        <taxon>Fungi</taxon>
        <taxon>Dikarya</taxon>
        <taxon>Ascomycota</taxon>
        <taxon>Saccharomycotina</taxon>
        <taxon>Saccharomycetes</taxon>
        <taxon>Saccharomycetales</taxon>
        <taxon>Saccharomycetaceae</taxon>
        <taxon>Saccharomyces</taxon>
    </lineage>
</organism>
<evidence type="ECO:0000269" key="1">
    <source>
    </source>
</evidence>
<evidence type="ECO:0000269" key="2">
    <source>
    </source>
</evidence>
<evidence type="ECO:0000269" key="3">
    <source>
    </source>
</evidence>
<evidence type="ECO:0000303" key="4">
    <source>
    </source>
</evidence>
<evidence type="ECO:0000303" key="5">
    <source>
    </source>
</evidence>
<evidence type="ECO:0000305" key="6"/>
<evidence type="ECO:0000305" key="7">
    <source>
    </source>
</evidence>
<evidence type="ECO:0000305" key="8">
    <source>
    </source>
</evidence>
<protein>
    <recommendedName>
        <fullName evidence="4">Large ribosomal subunit protein eL34B</fullName>
    </recommendedName>
    <alternativeName>
        <fullName evidence="5">60S ribosomal protein L34-B</fullName>
    </alternativeName>
</protein>
<reference key="1">
    <citation type="journal article" date="1997" name="Nature">
        <title>The nucleotide sequence of Saccharomyces cerevisiae chromosome IX.</title>
        <authorList>
            <person name="Churcher C.M."/>
            <person name="Bowman S."/>
            <person name="Badcock K."/>
            <person name="Bankier A.T."/>
            <person name="Brown D."/>
            <person name="Chillingworth T."/>
            <person name="Connor R."/>
            <person name="Devlin K."/>
            <person name="Gentles S."/>
            <person name="Hamlin N."/>
            <person name="Harris D.E."/>
            <person name="Horsnell T."/>
            <person name="Hunt S."/>
            <person name="Jagels K."/>
            <person name="Jones M."/>
            <person name="Lye G."/>
            <person name="Moule S."/>
            <person name="Odell C."/>
            <person name="Pearson D."/>
            <person name="Rajandream M.A."/>
            <person name="Rice P."/>
            <person name="Rowley N."/>
            <person name="Skelton J."/>
            <person name="Smith V."/>
            <person name="Walsh S.V."/>
            <person name="Whitehead S."/>
            <person name="Barrell B.G."/>
        </authorList>
    </citation>
    <scope>NUCLEOTIDE SEQUENCE [LARGE SCALE GENOMIC DNA]</scope>
    <source>
        <strain>ATCC 204508 / S288c</strain>
    </source>
</reference>
<reference key="2">
    <citation type="journal article" date="2014" name="G3 (Bethesda)">
        <title>The reference genome sequence of Saccharomyces cerevisiae: Then and now.</title>
        <authorList>
            <person name="Engel S.R."/>
            <person name="Dietrich F.S."/>
            <person name="Fisk D.G."/>
            <person name="Binkley G."/>
            <person name="Balakrishnan R."/>
            <person name="Costanzo M.C."/>
            <person name="Dwight S.S."/>
            <person name="Hitz B.C."/>
            <person name="Karra K."/>
            <person name="Nash R.S."/>
            <person name="Weng S."/>
            <person name="Wong E.D."/>
            <person name="Lloyd P."/>
            <person name="Skrzypek M.S."/>
            <person name="Miyasato S.R."/>
            <person name="Simison M."/>
            <person name="Cherry J.M."/>
        </authorList>
    </citation>
    <scope>GENOME REANNOTATION</scope>
    <source>
        <strain>ATCC 204508 / S288c</strain>
    </source>
</reference>
<reference key="3">
    <citation type="journal article" date="1998" name="Yeast">
        <title>The list of cytoplasmic ribosomal proteins of Saccharomyces cerevisiae.</title>
        <authorList>
            <person name="Planta R.J."/>
            <person name="Mager W.H."/>
        </authorList>
    </citation>
    <scope>NOMENCLATURE</scope>
    <scope>SUBUNIT</scope>
</reference>
<reference key="4">
    <citation type="journal article" date="2003" name="Nature">
        <title>Global analysis of protein localization in budding yeast.</title>
        <authorList>
            <person name="Huh W.-K."/>
            <person name="Falvo J.V."/>
            <person name="Gerke L.C."/>
            <person name="Carroll A.S."/>
            <person name="Howson R.W."/>
            <person name="Weissman J.S."/>
            <person name="O'Shea E.K."/>
        </authorList>
    </citation>
    <scope>SUBCELLULAR LOCATION [LARGE SCALE ANALYSIS]</scope>
</reference>
<reference key="5">
    <citation type="journal article" date="2003" name="Nature">
        <title>Global analysis of protein expression in yeast.</title>
        <authorList>
            <person name="Ghaemmaghami S."/>
            <person name="Huh W.-K."/>
            <person name="Bower K."/>
            <person name="Howson R.W."/>
            <person name="Belle A."/>
            <person name="Dephoure N."/>
            <person name="O'Shea E.K."/>
            <person name="Weissman J.S."/>
        </authorList>
    </citation>
    <scope>LEVEL OF PROTEIN EXPRESSION [LARGE SCALE ANALYSIS]</scope>
</reference>
<reference key="6">
    <citation type="journal article" date="2011" name="Science">
        <title>The structure of the eukaryotic ribosome at 3.0 A resolution.</title>
        <authorList>
            <person name="Ben-Shem A."/>
            <person name="Garreau de Loubresse N."/>
            <person name="Melnikov S."/>
            <person name="Jenner L."/>
            <person name="Yusupova G."/>
            <person name="Yusupov M."/>
        </authorList>
    </citation>
    <scope>SUBUNIT</scope>
    <scope>SUBCELLULAR LOCATION</scope>
</reference>
<reference key="7">
    <citation type="journal article" date="2014" name="Curr. Opin. Struct. Biol.">
        <title>A new system for naming ribosomal proteins.</title>
        <authorList>
            <person name="Ban N."/>
            <person name="Beckmann R."/>
            <person name="Cate J.H.D."/>
            <person name="Dinman J.D."/>
            <person name="Dragon F."/>
            <person name="Ellis S.R."/>
            <person name="Lafontaine D.L.J."/>
            <person name="Lindahl L."/>
            <person name="Liljas A."/>
            <person name="Lipton J.M."/>
            <person name="McAlear M.A."/>
            <person name="Moore P.B."/>
            <person name="Noller H.F."/>
            <person name="Ortega J."/>
            <person name="Panse V.G."/>
            <person name="Ramakrishnan V."/>
            <person name="Spahn C.M.T."/>
            <person name="Steitz T.A."/>
            <person name="Tchorzewski M."/>
            <person name="Tollervey D."/>
            <person name="Warren A.J."/>
            <person name="Williamson J.R."/>
            <person name="Wilson D."/>
            <person name="Yonath A."/>
            <person name="Yusupov M."/>
        </authorList>
    </citation>
    <scope>NOMENCLATURE</scope>
</reference>